<organism>
    <name type="scientific">Saccharomyces cerevisiae (strain YJM789)</name>
    <name type="common">Baker's yeast</name>
    <dbReference type="NCBI Taxonomy" id="307796"/>
    <lineage>
        <taxon>Eukaryota</taxon>
        <taxon>Fungi</taxon>
        <taxon>Dikarya</taxon>
        <taxon>Ascomycota</taxon>
        <taxon>Saccharomycotina</taxon>
        <taxon>Saccharomycetes</taxon>
        <taxon>Saccharomycetales</taxon>
        <taxon>Saccharomycetaceae</taxon>
        <taxon>Saccharomyces</taxon>
    </lineage>
</organism>
<reference key="1">
    <citation type="journal article" date="2007" name="Proc. Natl. Acad. Sci. U.S.A.">
        <title>Genome sequencing and comparative analysis of Saccharomyces cerevisiae strain YJM789.</title>
        <authorList>
            <person name="Wei W."/>
            <person name="McCusker J.H."/>
            <person name="Hyman R.W."/>
            <person name="Jones T."/>
            <person name="Ning Y."/>
            <person name="Cao Z."/>
            <person name="Gu Z."/>
            <person name="Bruno D."/>
            <person name="Miranda M."/>
            <person name="Nguyen M."/>
            <person name="Wilhelmy J."/>
            <person name="Komp C."/>
            <person name="Tamse R."/>
            <person name="Wang X."/>
            <person name="Jia P."/>
            <person name="Luedi P."/>
            <person name="Oefner P.J."/>
            <person name="David L."/>
            <person name="Dietrich F.S."/>
            <person name="Li Y."/>
            <person name="Davis R.W."/>
            <person name="Steinmetz L.M."/>
        </authorList>
    </citation>
    <scope>NUCLEOTIDE SEQUENCE [LARGE SCALE GENOMIC DNA]</scope>
    <source>
        <strain>YJM789</strain>
    </source>
</reference>
<feature type="transit peptide" description="Mitochondrion" evidence="2">
    <location>
        <begin position="1"/>
        <end position="13"/>
    </location>
</feature>
<feature type="chain" id="PRO_0000372585" description="Amino-acid acetyltransferase, mitochondrial">
    <location>
        <begin position="14"/>
        <end position="574"/>
    </location>
</feature>
<feature type="domain" description="N-acetyltransferase" evidence="3">
    <location>
        <begin position="392"/>
        <end position="560"/>
    </location>
</feature>
<gene>
    <name type="primary">ARG2</name>
    <name type="ORF">SCY_2862</name>
</gene>
<dbReference type="EC" id="2.3.1.1"/>
<dbReference type="EMBL" id="AAFW02000038">
    <property type="protein sequence ID" value="EDN63505.1"/>
    <property type="molecule type" value="Genomic_DNA"/>
</dbReference>
<dbReference type="SMR" id="A6ZPQ2"/>
<dbReference type="HOGENOM" id="CLU_013088_0_0_1"/>
<dbReference type="UniPathway" id="UPA00068">
    <property type="reaction ID" value="UER00106"/>
</dbReference>
<dbReference type="Proteomes" id="UP000007060">
    <property type="component" value="Unassembled WGS sequence"/>
</dbReference>
<dbReference type="GO" id="GO:0005759">
    <property type="term" value="C:mitochondrial matrix"/>
    <property type="evidence" value="ECO:0007669"/>
    <property type="project" value="TreeGrafter"/>
</dbReference>
<dbReference type="GO" id="GO:0004042">
    <property type="term" value="F:L-glutamate N-acetyltransferase activity"/>
    <property type="evidence" value="ECO:0007669"/>
    <property type="project" value="InterPro"/>
</dbReference>
<dbReference type="GO" id="GO:0006526">
    <property type="term" value="P:L-arginine biosynthetic process"/>
    <property type="evidence" value="ECO:0007669"/>
    <property type="project" value="UniProtKB-UniPathway"/>
</dbReference>
<dbReference type="GO" id="GO:0006592">
    <property type="term" value="P:ornithine biosynthetic process"/>
    <property type="evidence" value="ECO:0007669"/>
    <property type="project" value="TreeGrafter"/>
</dbReference>
<dbReference type="FunFam" id="3.40.630.30:FF:000049">
    <property type="entry name" value="Amino-acid acetyltransferase, mitochondrial"/>
    <property type="match status" value="1"/>
</dbReference>
<dbReference type="Gene3D" id="3.40.630.30">
    <property type="match status" value="1"/>
</dbReference>
<dbReference type="InterPro" id="IPR011190">
    <property type="entry name" value="GlcNAc_Synth_fun"/>
</dbReference>
<dbReference type="InterPro" id="IPR006855">
    <property type="entry name" value="Vertebrate-like_GNAT_dom"/>
</dbReference>
<dbReference type="PANTHER" id="PTHR23342:SF4">
    <property type="entry name" value="AMINO-ACID ACETYLTRANSFERASE, MITOCHONDRIAL"/>
    <property type="match status" value="1"/>
</dbReference>
<dbReference type="PANTHER" id="PTHR23342">
    <property type="entry name" value="N-ACETYLGLUTAMATE SYNTHASE"/>
    <property type="match status" value="1"/>
</dbReference>
<dbReference type="Pfam" id="PF04768">
    <property type="entry name" value="NAT"/>
    <property type="match status" value="1"/>
</dbReference>
<dbReference type="PIRSF" id="PIRSF007892">
    <property type="entry name" value="NAGS_fungal"/>
    <property type="match status" value="1"/>
</dbReference>
<dbReference type="PROSITE" id="PS51731">
    <property type="entry name" value="GNAT_NAGS"/>
    <property type="match status" value="1"/>
</dbReference>
<sequence length="574" mass="65590">MWRRIFAHGLKYDQPNASSKNLILSVLNTTATKREAKDYLSKYTNDSGQHNHCLFFIRDLHKVAPAILSQFSSVIKRLGMLGLRPMFVIPPSPTHVNIQAELLDSIVTEADLKPLHFKEGLTKSRTGLYHSVFSQESRFFDIGNSNFIPIVKPYVYNEETASEFMTKDVVKFMDCLCQGNIPHIDKFFILNNAGGIPSGERNDNAHVFINLSQELEHLSSSLSHNISTLTKREPRSQNLLHRMEVYVKKDEISSLECEYHDHLENLLLMDKVLSNLAATATGLITTVKAAALSSDRKNPLVYNLLTDRSLISSSLPRFKKKDGEIDSPANMFDDHAWYELPSQQVNAAPSNSDAVLVTTVLKKGVHIKTYDYKTLTQFNSIGLPKEFHVSEKGAKPSNNSPKLDINKFKSIIDQSFKRSLDLHDYIKRINGKIATIIVIGDYEGIAILTYEGSEENSFVYLDKFAVLPHLKGSLGISDIIFNLMFKKFPNEILWRSRKDNVVNKWYFQRSVAVLDLSIDLDPEHCDEKQSQFKLFYYGNPQYAKRALRDKKRLREFMRSVRDIKPSWENEKNIS</sequence>
<protein>
    <recommendedName>
        <fullName>Amino-acid acetyltransferase, mitochondrial</fullName>
        <ecNumber>2.3.1.1</ecNumber>
    </recommendedName>
    <alternativeName>
        <fullName>Arginine-requiring protein 2</fullName>
    </alternativeName>
    <alternativeName>
        <fullName>Glutamate N-acetyltransferase</fullName>
    </alternativeName>
    <alternativeName>
        <fullName>N-acetylglutamate synthase</fullName>
        <shortName>AGS</shortName>
        <shortName>NAGS</shortName>
    </alternativeName>
</protein>
<accession>A6ZPQ2</accession>
<name>NAGS_YEAS7</name>
<keyword id="KW-0012">Acyltransferase</keyword>
<keyword id="KW-0028">Amino-acid biosynthesis</keyword>
<keyword id="KW-0496">Mitochondrion</keyword>
<keyword id="KW-0808">Transferase</keyword>
<keyword id="KW-0809">Transit peptide</keyword>
<evidence type="ECO:0000250" key="1"/>
<evidence type="ECO:0000255" key="2"/>
<evidence type="ECO:0000255" key="3">
    <source>
        <dbReference type="PROSITE-ProRule" id="PRU00532"/>
    </source>
</evidence>
<evidence type="ECO:0000305" key="4"/>
<comment type="function">
    <text evidence="1">N-acetylglutamate synthase involved in arginine biosynthesis.</text>
</comment>
<comment type="catalytic activity">
    <reaction>
        <text>L-glutamate + acetyl-CoA = N-acetyl-L-glutamate + CoA + H(+)</text>
        <dbReference type="Rhea" id="RHEA:24292"/>
        <dbReference type="ChEBI" id="CHEBI:15378"/>
        <dbReference type="ChEBI" id="CHEBI:29985"/>
        <dbReference type="ChEBI" id="CHEBI:44337"/>
        <dbReference type="ChEBI" id="CHEBI:57287"/>
        <dbReference type="ChEBI" id="CHEBI:57288"/>
        <dbReference type="EC" id="2.3.1.1"/>
    </reaction>
</comment>
<comment type="activity regulation">
    <text evidence="1">Feedback inhibition by L-arginine.</text>
</comment>
<comment type="pathway">
    <text>Amino-acid biosynthesis; L-arginine biosynthesis; N(2)-acetyl-L-ornithine from L-glutamate: step 1/4.</text>
</comment>
<comment type="subunit">
    <text evidence="1">Interacts with the acetylglutamate kinase chain of AGR5,6.</text>
</comment>
<comment type="subcellular location">
    <subcellularLocation>
        <location evidence="1">Mitochondrion</location>
    </subcellularLocation>
</comment>
<comment type="similarity">
    <text evidence="4">Belongs to the acetyltransferase family.</text>
</comment>
<proteinExistence type="inferred from homology"/>